<name>AMPA_BLOFL</name>
<accession>Q7VQT0</accession>
<reference key="1">
    <citation type="journal article" date="2003" name="Proc. Natl. Acad. Sci. U.S.A.">
        <title>The genome sequence of Blochmannia floridanus: comparative analysis of reduced genomes.</title>
        <authorList>
            <person name="Gil R."/>
            <person name="Silva F.J."/>
            <person name="Zientz E."/>
            <person name="Delmotte F."/>
            <person name="Gonzalez-Candelas F."/>
            <person name="Latorre A."/>
            <person name="Rausell C."/>
            <person name="Kamerbeek J."/>
            <person name="Gadau J."/>
            <person name="Hoelldobler B."/>
            <person name="van Ham R.C.H.J."/>
            <person name="Gross R."/>
            <person name="Moya A."/>
        </authorList>
    </citation>
    <scope>NUCLEOTIDE SEQUENCE [LARGE SCALE GENOMIC DNA]</scope>
</reference>
<keyword id="KW-0031">Aminopeptidase</keyword>
<keyword id="KW-0963">Cytoplasm</keyword>
<keyword id="KW-0378">Hydrolase</keyword>
<keyword id="KW-0464">Manganese</keyword>
<keyword id="KW-0479">Metal-binding</keyword>
<keyword id="KW-0645">Protease</keyword>
<keyword id="KW-1185">Reference proteome</keyword>
<proteinExistence type="inferred from homology"/>
<gene>
    <name evidence="1" type="primary">pepA</name>
    <name type="ordered locus">Bfl035</name>
</gene>
<organism>
    <name type="scientific">Blochmanniella floridana</name>
    <dbReference type="NCBI Taxonomy" id="203907"/>
    <lineage>
        <taxon>Bacteria</taxon>
        <taxon>Pseudomonadati</taxon>
        <taxon>Pseudomonadota</taxon>
        <taxon>Gammaproteobacteria</taxon>
        <taxon>Enterobacterales</taxon>
        <taxon>Enterobacteriaceae</taxon>
        <taxon>ant endosymbionts</taxon>
        <taxon>Candidatus Blochmanniella</taxon>
    </lineage>
</organism>
<evidence type="ECO:0000255" key="1">
    <source>
        <dbReference type="HAMAP-Rule" id="MF_00181"/>
    </source>
</evidence>
<comment type="function">
    <text evidence="1">Presumably involved in the processing and regular turnover of intracellular proteins. Catalyzes the removal of unsubstituted N-terminal amino acids from various peptides.</text>
</comment>
<comment type="catalytic activity">
    <reaction evidence="1">
        <text>Release of an N-terminal amino acid, Xaa-|-Yaa-, in which Xaa is preferably Leu, but may be other amino acids including Pro although not Arg or Lys, and Yaa may be Pro. Amino acid amides and methyl esters are also readily hydrolyzed, but rates on arylamides are exceedingly low.</text>
        <dbReference type="EC" id="3.4.11.1"/>
    </reaction>
</comment>
<comment type="catalytic activity">
    <reaction evidence="1">
        <text>Release of an N-terminal amino acid, preferentially leucine, but not glutamic or aspartic acids.</text>
        <dbReference type="EC" id="3.4.11.10"/>
    </reaction>
</comment>
<comment type="cofactor">
    <cofactor evidence="1">
        <name>Mn(2+)</name>
        <dbReference type="ChEBI" id="CHEBI:29035"/>
    </cofactor>
    <text evidence="1">Binds 2 manganese ions per subunit.</text>
</comment>
<comment type="subcellular location">
    <subcellularLocation>
        <location evidence="1">Cytoplasm</location>
    </subcellularLocation>
</comment>
<comment type="similarity">
    <text evidence="1">Belongs to the peptidase M17 family.</text>
</comment>
<sequence>MPIKFDVTQEHIESYPNFCIVTGVFNDSYLFPSTIQIDKMSQGYISSLLKRNNFNGSINQHLLLYDAPYFFNKLILLIGCGKKNEFKSQSYNTVIHYIINFCKKSSITKILLLLSELNIDGYDNYWKIRNSITLCNNECYIFNKFKNINDVTKKNITYEIISYIDKLDNNFQYCKQAVKDGLAIAKGLNIAKNLGNMPSNYCTPNYLSNKVQELSNYNTDLDIEIINELQLKTIGMHAYLAVGSGSIYPAVMPIIKYQKNPKGPNTNPIILIGKGVTFDSGGISIKPSDKMDEMKYDMCGAAAVYAIMSIVSELQLPLNIIGILAVSENMISSKSLKPGDILTTLSGQTIEILNTDAEGRLLLCDVLTYVERYNPEIVIDIATLTGACVIALGNHYSGLMSNDNNLSNNLIFASKQTRDYIWRLPLDENFEKQLESSCADIANVGGRSGGAITAACFLKKFAHKYKWMHLDIAGSAWISKNCVKSSTGRPVELLTQFLINISKI</sequence>
<feature type="chain" id="PRO_0000165735" description="Probable cytosol aminopeptidase">
    <location>
        <begin position="1"/>
        <end position="504"/>
    </location>
</feature>
<feature type="active site" evidence="1">
    <location>
        <position position="286"/>
    </location>
</feature>
<feature type="active site" evidence="1">
    <location>
        <position position="360"/>
    </location>
</feature>
<feature type="binding site" evidence="1">
    <location>
        <position position="274"/>
    </location>
    <ligand>
        <name>Mn(2+)</name>
        <dbReference type="ChEBI" id="CHEBI:29035"/>
        <label>2</label>
    </ligand>
</feature>
<feature type="binding site" evidence="1">
    <location>
        <position position="279"/>
    </location>
    <ligand>
        <name>Mn(2+)</name>
        <dbReference type="ChEBI" id="CHEBI:29035"/>
        <label>1</label>
    </ligand>
</feature>
<feature type="binding site" evidence="1">
    <location>
        <position position="279"/>
    </location>
    <ligand>
        <name>Mn(2+)</name>
        <dbReference type="ChEBI" id="CHEBI:29035"/>
        <label>2</label>
    </ligand>
</feature>
<feature type="binding site" evidence="1">
    <location>
        <position position="297"/>
    </location>
    <ligand>
        <name>Mn(2+)</name>
        <dbReference type="ChEBI" id="CHEBI:29035"/>
        <label>2</label>
    </ligand>
</feature>
<feature type="binding site" evidence="1">
    <location>
        <position position="356"/>
    </location>
    <ligand>
        <name>Mn(2+)</name>
        <dbReference type="ChEBI" id="CHEBI:29035"/>
        <label>1</label>
    </ligand>
</feature>
<feature type="binding site" evidence="1">
    <location>
        <position position="358"/>
    </location>
    <ligand>
        <name>Mn(2+)</name>
        <dbReference type="ChEBI" id="CHEBI:29035"/>
        <label>1</label>
    </ligand>
</feature>
<feature type="binding site" evidence="1">
    <location>
        <position position="358"/>
    </location>
    <ligand>
        <name>Mn(2+)</name>
        <dbReference type="ChEBI" id="CHEBI:29035"/>
        <label>2</label>
    </ligand>
</feature>
<protein>
    <recommendedName>
        <fullName evidence="1">Probable cytosol aminopeptidase</fullName>
        <ecNumber evidence="1">3.4.11.1</ecNumber>
    </recommendedName>
    <alternativeName>
        <fullName evidence="1">Leucine aminopeptidase</fullName>
        <shortName evidence="1">LAP</shortName>
        <ecNumber evidence="1">3.4.11.10</ecNumber>
    </alternativeName>
    <alternativeName>
        <fullName evidence="1">Leucyl aminopeptidase</fullName>
    </alternativeName>
</protein>
<dbReference type="EC" id="3.4.11.1" evidence="1"/>
<dbReference type="EC" id="3.4.11.10" evidence="1"/>
<dbReference type="EMBL" id="BX248583">
    <property type="protein sequence ID" value="CAD83563.1"/>
    <property type="molecule type" value="Genomic_DNA"/>
</dbReference>
<dbReference type="SMR" id="Q7VQT0"/>
<dbReference type="STRING" id="203907.Bfl035"/>
<dbReference type="MEROPS" id="M17.003"/>
<dbReference type="KEGG" id="bfl:Bfl035"/>
<dbReference type="eggNOG" id="COG0260">
    <property type="taxonomic scope" value="Bacteria"/>
</dbReference>
<dbReference type="HOGENOM" id="CLU_013734_2_2_6"/>
<dbReference type="OrthoDB" id="9809354at2"/>
<dbReference type="Proteomes" id="UP000002192">
    <property type="component" value="Chromosome"/>
</dbReference>
<dbReference type="GO" id="GO:0005737">
    <property type="term" value="C:cytoplasm"/>
    <property type="evidence" value="ECO:0007669"/>
    <property type="project" value="UniProtKB-SubCell"/>
</dbReference>
<dbReference type="GO" id="GO:0030145">
    <property type="term" value="F:manganese ion binding"/>
    <property type="evidence" value="ECO:0007669"/>
    <property type="project" value="UniProtKB-UniRule"/>
</dbReference>
<dbReference type="GO" id="GO:0070006">
    <property type="term" value="F:metalloaminopeptidase activity"/>
    <property type="evidence" value="ECO:0007669"/>
    <property type="project" value="InterPro"/>
</dbReference>
<dbReference type="GO" id="GO:0006508">
    <property type="term" value="P:proteolysis"/>
    <property type="evidence" value="ECO:0007669"/>
    <property type="project" value="UniProtKB-KW"/>
</dbReference>
<dbReference type="CDD" id="cd00433">
    <property type="entry name" value="Peptidase_M17"/>
    <property type="match status" value="1"/>
</dbReference>
<dbReference type="Gene3D" id="3.40.220.10">
    <property type="entry name" value="Leucine Aminopeptidase, subunit E, domain 1"/>
    <property type="match status" value="1"/>
</dbReference>
<dbReference type="Gene3D" id="3.40.630.10">
    <property type="entry name" value="Zn peptidases"/>
    <property type="match status" value="1"/>
</dbReference>
<dbReference type="HAMAP" id="MF_00181">
    <property type="entry name" value="Cytosol_peptidase_M17"/>
    <property type="match status" value="1"/>
</dbReference>
<dbReference type="InterPro" id="IPR011356">
    <property type="entry name" value="Leucine_aapep/pepB"/>
</dbReference>
<dbReference type="InterPro" id="IPR043472">
    <property type="entry name" value="Macro_dom-like"/>
</dbReference>
<dbReference type="InterPro" id="IPR000819">
    <property type="entry name" value="Peptidase_M17_C"/>
</dbReference>
<dbReference type="InterPro" id="IPR023042">
    <property type="entry name" value="Peptidase_M17_leu_NH2_pept"/>
</dbReference>
<dbReference type="InterPro" id="IPR008283">
    <property type="entry name" value="Peptidase_M17_N"/>
</dbReference>
<dbReference type="NCBIfam" id="NF002074">
    <property type="entry name" value="PRK00913.1-4"/>
    <property type="match status" value="1"/>
</dbReference>
<dbReference type="PANTHER" id="PTHR11963:SF23">
    <property type="entry name" value="CYTOSOL AMINOPEPTIDASE"/>
    <property type="match status" value="1"/>
</dbReference>
<dbReference type="PANTHER" id="PTHR11963">
    <property type="entry name" value="LEUCINE AMINOPEPTIDASE-RELATED"/>
    <property type="match status" value="1"/>
</dbReference>
<dbReference type="Pfam" id="PF00883">
    <property type="entry name" value="Peptidase_M17"/>
    <property type="match status" value="1"/>
</dbReference>
<dbReference type="Pfam" id="PF02789">
    <property type="entry name" value="Peptidase_M17_N"/>
    <property type="match status" value="1"/>
</dbReference>
<dbReference type="PRINTS" id="PR00481">
    <property type="entry name" value="LAMNOPPTDASE"/>
</dbReference>
<dbReference type="SUPFAM" id="SSF52949">
    <property type="entry name" value="Macro domain-like"/>
    <property type="match status" value="1"/>
</dbReference>
<dbReference type="SUPFAM" id="SSF53187">
    <property type="entry name" value="Zn-dependent exopeptidases"/>
    <property type="match status" value="1"/>
</dbReference>
<dbReference type="PROSITE" id="PS00631">
    <property type="entry name" value="CYTOSOL_AP"/>
    <property type="match status" value="1"/>
</dbReference>